<keyword id="KW-0244">Early protein</keyword>
<keyword id="KW-0945">Host-virus interaction</keyword>
<keyword id="KW-1081">Inhibition of host apoptosis by viral BCL2-like protein</keyword>
<keyword id="KW-1119">Modulation of host cell apoptosis by virus</keyword>
<dbReference type="EMBL" id="U55001">
    <property type="protein sequence ID" value="AAB05430.1"/>
    <property type="molecule type" value="Genomic_DNA"/>
</dbReference>
<dbReference type="SMR" id="Q65942"/>
<dbReference type="GO" id="GO:0033668">
    <property type="term" value="P:symbiont-mediated suppression of host apoptosis"/>
    <property type="evidence" value="ECO:0007669"/>
    <property type="project" value="UniProtKB-KW"/>
</dbReference>
<dbReference type="InterPro" id="IPR002924">
    <property type="entry name" value="Adenovir_t-Ag_E1B_19kDa"/>
</dbReference>
<dbReference type="InterPro" id="IPR002475">
    <property type="entry name" value="Bcl2-like"/>
</dbReference>
<dbReference type="Pfam" id="PF01691">
    <property type="entry name" value="Adeno_E1B_19K"/>
    <property type="match status" value="1"/>
</dbReference>
<dbReference type="PROSITE" id="PS50062">
    <property type="entry name" value="BCL2_FAMILY"/>
    <property type="match status" value="1"/>
</dbReference>
<proteinExistence type="inferred from homology"/>
<protein>
    <recommendedName>
        <fullName>E1B protein, small T-antigen</fullName>
    </recommendedName>
    <alternativeName>
        <fullName>E1B 19 kDa protein</fullName>
        <shortName>E1B-19K</shortName>
    </alternativeName>
</protein>
<comment type="similarity">
    <text evidence="1">Belongs to the adenoviridae E1B 19 kDa protein family.</text>
</comment>
<sequence>MDPLKICENYLTFRSIIKGSTFSPGVFRRWRFHALADVVGNIVEREEGRFWEIVPETHTLWALFRGGFTVAPFTEILTSLQLENRGRQLAFLAFLSFLLRNWPSDSVVSEDARLDLVCAPAWSRIQIWSQAARLINDLPESVFEGQGSVVEEECGEEHLARDSDDPLFD</sequence>
<organism>
    <name type="scientific">Canine adenovirus serotype 1 (strain CLL)</name>
    <name type="common">CAdV-1</name>
    <name type="synonym">Canine adenovirus 1 (strain CLL)</name>
    <dbReference type="NCBI Taxonomy" id="69150"/>
    <lineage>
        <taxon>Viruses</taxon>
        <taxon>Varidnaviria</taxon>
        <taxon>Bamfordvirae</taxon>
        <taxon>Preplasmiviricota</taxon>
        <taxon>Tectiliviricetes</taxon>
        <taxon>Rowavirales</taxon>
        <taxon>Adenoviridae</taxon>
        <taxon>Mastadenovirus</taxon>
        <taxon>Canine mastadenovirus A</taxon>
    </lineage>
</organism>
<name>E1BS_ADECC</name>
<accession>Q65942</accession>
<reference key="1">
    <citation type="submission" date="1996-08" db="EMBL/GenBank/DDBJ databases">
        <title>DNA sequence and genomic organization of canine adenovirus type 1.</title>
        <authorList>
            <person name="Campbell J.B."/>
            <person name="Zhao Y."/>
        </authorList>
    </citation>
    <scope>NUCLEOTIDE SEQUENCE [LARGE SCALE GENOMIC DNA]</scope>
</reference>
<feature type="chain" id="PRO_0000221717" description="E1B protein, small T-antigen">
    <location>
        <begin position="1"/>
        <end position="169"/>
    </location>
</feature>
<organismHost>
    <name type="scientific">Canis lupus familiaris</name>
    <name type="common">Dog</name>
    <name type="synonym">Canis familiaris</name>
    <dbReference type="NCBI Taxonomy" id="9615"/>
</organismHost>
<evidence type="ECO:0000305" key="1"/>